<keyword id="KW-0064">Aspartyl protease</keyword>
<keyword id="KW-0997">Cell inner membrane</keyword>
<keyword id="KW-1003">Cell membrane</keyword>
<keyword id="KW-0378">Hydrolase</keyword>
<keyword id="KW-0472">Membrane</keyword>
<keyword id="KW-0645">Protease</keyword>
<keyword id="KW-0812">Transmembrane</keyword>
<keyword id="KW-1133">Transmembrane helix</keyword>
<accession>B0S977</accession>
<name>LSPA_LEPBA</name>
<evidence type="ECO:0000255" key="1">
    <source>
        <dbReference type="HAMAP-Rule" id="MF_00161"/>
    </source>
</evidence>
<comment type="function">
    <text evidence="1">This protein specifically catalyzes the removal of signal peptides from prolipoproteins.</text>
</comment>
<comment type="catalytic activity">
    <reaction evidence="1">
        <text>Release of signal peptides from bacterial membrane prolipoproteins. Hydrolyzes -Xaa-Yaa-Zaa-|-(S,diacylglyceryl)Cys-, in which Xaa is hydrophobic (preferably Leu), and Yaa (Ala or Ser) and Zaa (Gly or Ala) have small, neutral side chains.</text>
        <dbReference type="EC" id="3.4.23.36"/>
    </reaction>
</comment>
<comment type="pathway">
    <text evidence="1">Protein modification; lipoprotein biosynthesis (signal peptide cleavage).</text>
</comment>
<comment type="subcellular location">
    <subcellularLocation>
        <location evidence="1">Cell inner membrane</location>
        <topology evidence="1">Multi-pass membrane protein</topology>
    </subcellularLocation>
</comment>
<comment type="similarity">
    <text evidence="1">Belongs to the peptidase A8 family.</text>
</comment>
<organism>
    <name type="scientific">Leptospira biflexa serovar Patoc (strain Patoc 1 / Ames)</name>
    <dbReference type="NCBI Taxonomy" id="355278"/>
    <lineage>
        <taxon>Bacteria</taxon>
        <taxon>Pseudomonadati</taxon>
        <taxon>Spirochaetota</taxon>
        <taxon>Spirochaetia</taxon>
        <taxon>Leptospirales</taxon>
        <taxon>Leptospiraceae</taxon>
        <taxon>Leptospira</taxon>
    </lineage>
</organism>
<gene>
    <name evidence="1" type="primary">lspA</name>
    <name type="ordered locus">LBF_1697</name>
</gene>
<reference key="1">
    <citation type="journal article" date="2008" name="PLoS ONE">
        <title>Genome sequence of the saprophyte Leptospira biflexa provides insights into the evolution of Leptospira and the pathogenesis of leptospirosis.</title>
        <authorList>
            <person name="Picardeau M."/>
            <person name="Bulach D.M."/>
            <person name="Bouchier C."/>
            <person name="Zuerner R.L."/>
            <person name="Zidane N."/>
            <person name="Wilson P.J."/>
            <person name="Creno S."/>
            <person name="Kuczek E.S."/>
            <person name="Bommezzadri S."/>
            <person name="Davis J.C."/>
            <person name="McGrath A."/>
            <person name="Johnson M.J."/>
            <person name="Boursaux-Eude C."/>
            <person name="Seemann T."/>
            <person name="Rouy Z."/>
            <person name="Coppel R.L."/>
            <person name="Rood J.I."/>
            <person name="Lajus A."/>
            <person name="Davies J.K."/>
            <person name="Medigue C."/>
            <person name="Adler B."/>
        </authorList>
    </citation>
    <scope>NUCLEOTIDE SEQUENCE [LARGE SCALE GENOMIC DNA]</scope>
    <source>
        <strain>Patoc 1 / Ames</strain>
    </source>
</reference>
<protein>
    <recommendedName>
        <fullName evidence="1">Lipoprotein signal peptidase</fullName>
        <ecNumber evidence="1">3.4.23.36</ecNumber>
    </recommendedName>
    <alternativeName>
        <fullName evidence="1">Prolipoprotein signal peptidase</fullName>
    </alternativeName>
    <alternativeName>
        <fullName evidence="1">Signal peptidase II</fullName>
        <shortName evidence="1">SPase II</shortName>
    </alternativeName>
</protein>
<sequence>MKLPKTPFFSVFKPGYLAFVAFGLFLDLSSKYVIITKMYAHESIPVLGDFFRLSLTFNTGFVFGLFQDNALPSLFATGFAIVFLIFYRWENSDLGNAWGWNFVMAGAFGNFLDKFFVKIPGSGFRFGFTPEKPGIEFIGVVDFLDFEWPDFLLFDRWPAFNVADSCVSIGIVILLFTMDWKEMDKK</sequence>
<proteinExistence type="inferred from homology"/>
<dbReference type="EC" id="3.4.23.36" evidence="1"/>
<dbReference type="EMBL" id="CP000777">
    <property type="protein sequence ID" value="ABZ94204.1"/>
    <property type="molecule type" value="Genomic_DNA"/>
</dbReference>
<dbReference type="RefSeq" id="WP_012388734.1">
    <property type="nucleotide sequence ID" value="NC_010842.1"/>
</dbReference>
<dbReference type="SMR" id="B0S977"/>
<dbReference type="KEGG" id="lbf:LBF_1697"/>
<dbReference type="HOGENOM" id="CLU_083252_3_1_12"/>
<dbReference type="UniPathway" id="UPA00665"/>
<dbReference type="GO" id="GO:0005886">
    <property type="term" value="C:plasma membrane"/>
    <property type="evidence" value="ECO:0007669"/>
    <property type="project" value="UniProtKB-SubCell"/>
</dbReference>
<dbReference type="GO" id="GO:0004190">
    <property type="term" value="F:aspartic-type endopeptidase activity"/>
    <property type="evidence" value="ECO:0007669"/>
    <property type="project" value="UniProtKB-UniRule"/>
</dbReference>
<dbReference type="GO" id="GO:0006508">
    <property type="term" value="P:proteolysis"/>
    <property type="evidence" value="ECO:0007669"/>
    <property type="project" value="UniProtKB-KW"/>
</dbReference>
<dbReference type="HAMAP" id="MF_00161">
    <property type="entry name" value="LspA"/>
    <property type="match status" value="1"/>
</dbReference>
<dbReference type="InterPro" id="IPR001872">
    <property type="entry name" value="Peptidase_A8"/>
</dbReference>
<dbReference type="NCBIfam" id="NF011364">
    <property type="entry name" value="PRK14783.1"/>
    <property type="match status" value="1"/>
</dbReference>
<dbReference type="PANTHER" id="PTHR33695">
    <property type="entry name" value="LIPOPROTEIN SIGNAL PEPTIDASE"/>
    <property type="match status" value="1"/>
</dbReference>
<dbReference type="PANTHER" id="PTHR33695:SF1">
    <property type="entry name" value="LIPOPROTEIN SIGNAL PEPTIDASE"/>
    <property type="match status" value="1"/>
</dbReference>
<dbReference type="Pfam" id="PF01252">
    <property type="entry name" value="Peptidase_A8"/>
    <property type="match status" value="1"/>
</dbReference>
<dbReference type="PRINTS" id="PR00781">
    <property type="entry name" value="LIPOSIGPTASE"/>
</dbReference>
<dbReference type="PROSITE" id="PS00855">
    <property type="entry name" value="SPASE_II"/>
    <property type="match status" value="1"/>
</dbReference>
<feature type="chain" id="PRO_1000097261" description="Lipoprotein signal peptidase">
    <location>
        <begin position="1"/>
        <end position="186"/>
    </location>
</feature>
<feature type="transmembrane region" description="Helical" evidence="1">
    <location>
        <begin position="8"/>
        <end position="28"/>
    </location>
</feature>
<feature type="transmembrane region" description="Helical" evidence="1">
    <location>
        <begin position="44"/>
        <end position="64"/>
    </location>
</feature>
<feature type="transmembrane region" description="Helical" evidence="1">
    <location>
        <begin position="66"/>
        <end position="86"/>
    </location>
</feature>
<feature type="transmembrane region" description="Helical" evidence="1">
    <location>
        <begin position="97"/>
        <end position="117"/>
    </location>
</feature>
<feature type="transmembrane region" description="Helical" evidence="1">
    <location>
        <begin position="157"/>
        <end position="177"/>
    </location>
</feature>
<feature type="active site" evidence="1">
    <location>
        <position position="142"/>
    </location>
</feature>
<feature type="active site" evidence="1">
    <location>
        <position position="164"/>
    </location>
</feature>